<reference key="1">
    <citation type="journal article" date="2007" name="Mol. Plant Microbe Interact.">
        <title>Expression profiles of genes encoded by the supernumerary chromosome controlling AM-toxin biosynthesis and pathogenicity in the apple pathotype of Alternaria alternata.</title>
        <authorList>
            <person name="Harimoto Y."/>
            <person name="Hatta R."/>
            <person name="Kodama M."/>
            <person name="Yamamoto M."/>
            <person name="Otani H."/>
            <person name="Tsuge T."/>
        </authorList>
    </citation>
    <scope>NUCLEOTIDE SEQUENCE [GENOMIC DNA]</scope>
    <scope>INDUCTION</scope>
    <scope>PATHWAY</scope>
    <source>
        <strain>NBRC 8984</strain>
    </source>
</reference>
<reference key="2">
    <citation type="journal article" date="2000" name="Mol. Plant Microbe Interact.">
        <title>Cloning and characterization of a cyclic peptide synthetase gene from Alternaria alternata apple pathotype whose product is involved in AM-toxin synthesis and pathogenicity.</title>
        <authorList>
            <person name="Johnson R.D."/>
            <person name="Johnson L."/>
            <person name="Itoh Y."/>
            <person name="Kodama M."/>
            <person name="Otani H."/>
            <person name="Kohmoto K."/>
        </authorList>
    </citation>
    <scope>FUNCTION</scope>
    <source>
        <strain>M-71</strain>
    </source>
</reference>
<reference key="3">
    <citation type="journal article" date="2004" name="Mol. Microbiol.">
        <title>Dissection of the host range of the fungal plant pathogen Alternaria alternata by modification of secondary metabolism.</title>
        <authorList>
            <person name="Ito K."/>
            <person name="Tanaka T."/>
            <person name="Hatta R."/>
            <person name="Yamamoto M."/>
            <person name="Akimitsu K."/>
            <person name="Tsuge T."/>
        </authorList>
    </citation>
    <scope>FUNCTION</scope>
    <source>
        <strain>NBRC 8984</strain>
    </source>
</reference>
<reference key="4">
    <citation type="journal article" date="2013" name="FEMS Microbiol. Rev.">
        <title>Host-selective toxins produced by the plant pathogenic fungus Alternaria alternata.</title>
        <authorList>
            <person name="Tsuge T."/>
            <person name="Harimoto Y."/>
            <person name="Akimitsu K."/>
            <person name="Ohtani K."/>
            <person name="Kodama M."/>
            <person name="Akagi Y."/>
            <person name="Egusa M."/>
            <person name="Yamamoto M."/>
            <person name="Otani H."/>
        </authorList>
    </citation>
    <scope>REVIEW ON HOST-SELECTIVE TOXINS</scope>
</reference>
<evidence type="ECO:0000250" key="1">
    <source>
        <dbReference type="UniProtKB" id="K0E2G4"/>
    </source>
</evidence>
<evidence type="ECO:0000250" key="2">
    <source>
        <dbReference type="UniProtKB" id="P20004"/>
    </source>
</evidence>
<evidence type="ECO:0000269" key="3">
    <source>
    </source>
</evidence>
<evidence type="ECO:0000269" key="4">
    <source>
    </source>
</evidence>
<evidence type="ECO:0000269" key="5">
    <source>
    </source>
</evidence>
<evidence type="ECO:0000303" key="6">
    <source>
    </source>
</evidence>
<evidence type="ECO:0000303" key="7">
    <source>
    </source>
</evidence>
<evidence type="ECO:0000305" key="8"/>
<evidence type="ECO:0000305" key="9">
    <source>
    </source>
</evidence>
<evidence type="ECO:0000305" key="10">
    <source>
    </source>
</evidence>
<comment type="function">
    <text evidence="3 4 5 7 9 10">Aconitase; part of the gene clusters that mediate the biosynthesis of AM-toxins, host-selective toxins (HSTs) causing Alternaria blotch on apple, a worldwide distributed disease (Probable). AM-toxins are cyclic depsipeptides containing the 3 residues 2-hydroxy-isovaleric acid (2-HIV), dehydroalanine, L-alanine which are common for all 3 AM-toxins I to III. The fourth precursor is L-alpha-amino-methoxyphenyl-valeric acid (L-Amv) for AM-toxin I, L-alpha-amino-phenyl-valeric acid (L-Apv) for AM-toxin II, and L-alpha-amino-hydroxyphenyl-valeric acid (L-Ahv) for AM-toxin III (Probable). AM-toxins have two target sites for affecting susceptible apple cells; they cause invagination of the plasma membrane and electrolyte loss and chloroplast disorganization (PubMed:22846083). The non-ribosomal peptide synthetase AMT1 contains 4 catalytic modules and is responsible for activation of each residue in AM-toxin (PubMed:10875335). The aldo-keto reductase AMT2 catalyzes the conversion of 2-keto-isovaleric acid (2-KIV) to 2-hydroxy-isovaleric acid (2-HIV), one of the precursor residues incorporated by AMT1 during AM-toxin biosynthesis, by reduction of its ketone to an alcohol (PubMed:15066029). The cytochrome P450 monooxygenase AMT3 and the thioesterase AMT4 are also important for AM-toxin production, but their exact function within the AM-toxin biosynthesis are not known yet (PubMed:17990954). Up to 21 proteins (including AMT1 to AMT4) are predicted to be involved in AM-toxin biosynthesis since their expression ishighly up-regulated in AM-toxin-producing cultures (PubMed:17990954).</text>
</comment>
<comment type="pathway">
    <text evidence="10">Mycotoxin biosynthesis.</text>
</comment>
<comment type="induction">
    <text evidence="5">Expression is up-regulated more than 10 fold in toxin producing cultures.</text>
</comment>
<comment type="miscellaneous">
    <text evidence="5">Gene clusters encoding host-selective toxins (HSTs) are localized on conditionally dispensable chromosomes (CDCs), also called supernumerary chromosomes, where they are present in multiple copies (PubMed:17990954). The CDCs are not essential for saprophytic growth but controls host-selective pathogenicity (PubMed:17990954).</text>
</comment>
<comment type="similarity">
    <text evidence="8">Belongs to the aconitase/IPM isomerase family.</text>
</comment>
<organism>
    <name type="scientific">Alternaria alternata</name>
    <name type="common">Alternaria rot fungus</name>
    <name type="synonym">Torula alternata</name>
    <dbReference type="NCBI Taxonomy" id="5599"/>
    <lineage>
        <taxon>Eukaryota</taxon>
        <taxon>Fungi</taxon>
        <taxon>Dikarya</taxon>
        <taxon>Ascomycota</taxon>
        <taxon>Pezizomycotina</taxon>
        <taxon>Dothideomycetes</taxon>
        <taxon>Pleosporomycetidae</taxon>
        <taxon>Pleosporales</taxon>
        <taxon>Pleosporineae</taxon>
        <taxon>Pleosporaceae</taxon>
        <taxon>Alternaria</taxon>
        <taxon>Alternaria sect. Alternaria</taxon>
        <taxon>Alternaria alternata complex</taxon>
    </lineage>
</organism>
<dbReference type="EC" id="4.2.1.-" evidence="1"/>
<dbReference type="EMBL" id="AB525198">
    <property type="protein sequence ID" value="BAI44743.1"/>
    <property type="molecule type" value="Genomic_DNA"/>
</dbReference>
<dbReference type="EMBL" id="AB525199">
    <property type="protein sequence ID" value="BAI44765.1"/>
    <property type="molecule type" value="Genomic_DNA"/>
</dbReference>
<dbReference type="SMR" id="C9K7B9"/>
<dbReference type="VEuPathDB" id="FungiDB:CC77DRAFT_1042638"/>
<dbReference type="GO" id="GO:0016836">
    <property type="term" value="F:hydro-lyase activity"/>
    <property type="evidence" value="ECO:0007669"/>
    <property type="project" value="InterPro"/>
</dbReference>
<dbReference type="GO" id="GO:0051536">
    <property type="term" value="F:iron-sulfur cluster binding"/>
    <property type="evidence" value="ECO:0007669"/>
    <property type="project" value="UniProtKB-KW"/>
</dbReference>
<dbReference type="GO" id="GO:0046872">
    <property type="term" value="F:metal ion binding"/>
    <property type="evidence" value="ECO:0007669"/>
    <property type="project" value="UniProtKB-KW"/>
</dbReference>
<dbReference type="GO" id="GO:0170034">
    <property type="term" value="P:L-amino acid biosynthetic process"/>
    <property type="evidence" value="ECO:0007669"/>
    <property type="project" value="UniProtKB-ARBA"/>
</dbReference>
<dbReference type="GO" id="GO:0170038">
    <property type="term" value="P:proteinogenic amino acid biosynthetic process"/>
    <property type="evidence" value="ECO:0007669"/>
    <property type="project" value="UniProtKB-ARBA"/>
</dbReference>
<dbReference type="CDD" id="cd01577">
    <property type="entry name" value="IPMI_Swivel"/>
    <property type="match status" value="1"/>
</dbReference>
<dbReference type="Gene3D" id="3.30.499.10">
    <property type="entry name" value="Aconitase, domain 3"/>
    <property type="match status" value="2"/>
</dbReference>
<dbReference type="Gene3D" id="3.20.19.10">
    <property type="entry name" value="Aconitase, domain 4"/>
    <property type="match status" value="1"/>
</dbReference>
<dbReference type="InterPro" id="IPR015931">
    <property type="entry name" value="Acnase/IPM_dHydase_lsu_aba_1/3"/>
</dbReference>
<dbReference type="InterPro" id="IPR001030">
    <property type="entry name" value="Acoase/IPM_deHydtase_lsu_aba"/>
</dbReference>
<dbReference type="InterPro" id="IPR015928">
    <property type="entry name" value="Aconitase/3IPM_dehydase_swvl"/>
</dbReference>
<dbReference type="InterPro" id="IPR018136">
    <property type="entry name" value="Aconitase_4Fe-4S_BS"/>
</dbReference>
<dbReference type="InterPro" id="IPR036008">
    <property type="entry name" value="Aconitase_4Fe-4S_dom"/>
</dbReference>
<dbReference type="InterPro" id="IPR000573">
    <property type="entry name" value="AconitaseA/IPMdHydase_ssu_swvl"/>
</dbReference>
<dbReference type="InterPro" id="IPR050067">
    <property type="entry name" value="IPM_dehydratase_rel_enz"/>
</dbReference>
<dbReference type="InterPro" id="IPR033940">
    <property type="entry name" value="IPMI_Swivel"/>
</dbReference>
<dbReference type="InterPro" id="IPR011827">
    <property type="entry name" value="LeuD_type2/HacB/DmdB"/>
</dbReference>
<dbReference type="NCBIfam" id="TIGR02087">
    <property type="entry name" value="LEUD_arch"/>
    <property type="match status" value="1"/>
</dbReference>
<dbReference type="PANTHER" id="PTHR43822:SF2">
    <property type="entry name" value="HOMOACONITASE, MITOCHONDRIAL"/>
    <property type="match status" value="1"/>
</dbReference>
<dbReference type="PANTHER" id="PTHR43822">
    <property type="entry name" value="HOMOACONITASE, MITOCHONDRIAL-RELATED"/>
    <property type="match status" value="1"/>
</dbReference>
<dbReference type="Pfam" id="PF00330">
    <property type="entry name" value="Aconitase"/>
    <property type="match status" value="2"/>
</dbReference>
<dbReference type="Pfam" id="PF00694">
    <property type="entry name" value="Aconitase_C"/>
    <property type="match status" value="1"/>
</dbReference>
<dbReference type="PRINTS" id="PR00415">
    <property type="entry name" value="ACONITASE"/>
</dbReference>
<dbReference type="SUPFAM" id="SSF53732">
    <property type="entry name" value="Aconitase iron-sulfur domain"/>
    <property type="match status" value="1"/>
</dbReference>
<dbReference type="SUPFAM" id="SSF52016">
    <property type="entry name" value="LeuD/IlvD-like"/>
    <property type="match status" value="1"/>
</dbReference>
<dbReference type="PROSITE" id="PS01244">
    <property type="entry name" value="ACONITASE_2"/>
    <property type="match status" value="1"/>
</dbReference>
<proteinExistence type="evidence at transcript level"/>
<feature type="chain" id="PRO_0000444850" description="Aconitase AMT8">
    <location>
        <begin position="1"/>
        <end position="840"/>
    </location>
</feature>
<feature type="binding site" evidence="2">
    <location>
        <begin position="258"/>
        <end position="260"/>
    </location>
    <ligand>
        <name>substrate</name>
    </ligand>
</feature>
<feature type="binding site" evidence="2">
    <location>
        <position position="450"/>
    </location>
    <ligand>
        <name>[4Fe-4S] cluster</name>
        <dbReference type="ChEBI" id="CHEBI:49883"/>
    </ligand>
</feature>
<feature type="binding site" evidence="2">
    <location>
        <position position="513"/>
    </location>
    <ligand>
        <name>[4Fe-4S] cluster</name>
        <dbReference type="ChEBI" id="CHEBI:49883"/>
    </ligand>
</feature>
<feature type="binding site" evidence="2">
    <location>
        <position position="516"/>
    </location>
    <ligand>
        <name>[4Fe-4S] cluster</name>
        <dbReference type="ChEBI" id="CHEBI:49883"/>
    </ligand>
</feature>
<feature type="binding site" evidence="2">
    <location>
        <position position="536"/>
    </location>
    <ligand>
        <name>substrate</name>
    </ligand>
</feature>
<feature type="binding site" evidence="2">
    <location>
        <position position="541"/>
    </location>
    <ligand>
        <name>substrate</name>
    </ligand>
</feature>
<feature type="binding site" evidence="2">
    <location>
        <begin position="709"/>
        <end position="710"/>
    </location>
    <ligand>
        <name>substrate</name>
    </ligand>
</feature>
<accession>C9K7B9</accession>
<name>AMT8_ALTAL</name>
<protein>
    <recommendedName>
        <fullName evidence="1">Aconitase AMT8</fullName>
        <ecNumber evidence="1">4.2.1.-</ecNumber>
    </recommendedName>
    <alternativeName>
        <fullName evidence="6">AM-toxin biosynthesis protein 8</fullName>
    </alternativeName>
</protein>
<gene>
    <name evidence="6" type="primary">AMT8</name>
    <name evidence="6" type="synonym">AMT8-2</name>
</gene>
<sequence length="840" mass="90928">MAAYLFTCSILQTLSEAGKIEIAEDKLLHYLGELPGTPNGPVQLLENICTILEGQGRATHGNVIRHVLNIVVTEQELGGLGISGKSWEEVDEHTLHEIKFLTDAWLTAAESRAAARHLPQPLKQQDTRRLPMNLAEKILAHHAFSVPRRERVVAGDLLRVSIDWVIASELSWVGMKHSVTSLDMKPSAWRNDRFWLSGDHTVDPRTYHDKRVQALIKGLESAKRDLKMTENQGSNYTIMHTEFVRERAEPGMLVLGSDSHTCSAGAVSALAIGLGAGDVMAGLATGETWFKVPECIRINFTGQPAWYIGGKDVILSVLKQLKRNTYAAERIVEFGGAGAKLLSCDARFAISNMCTVRDPNDRPELKPTADDRSTSRNLVLLQAFLFPTVSLNRLSIAAGARYEGASYASTFEIDLGEVEPFIAIYPSPDQVCPVAERTGMRFDGCFIGACTTTEEDLVLAALVLEAGLKRGLTLEKGKRIVVPGSLPIVKNLRALGLLDIYKACGYEQPAPGCSLCLGIGADVAEAGSQWLSSQNRNFQNRMGRGAVGHICSAATVAASSFNMTLTDPCDLLNDVSETTFKEYLARCKVARGGSESKLAGGKQANNVQYIEPCLLGENARSAEGEVPALEAAAVSLDDARLGSINSRIYKLDDYVDTDAIIPAPACVGSPTDEMLGSHCFELTNPDFRDYVRSGHRVIVGGRAFGCGSSREEAPRALKGLGVQCVIARSFAFIFGRNMPNIGMLAIVLTDEAFYKAAQQGENIEVDVEGRVVHVAGQTFPFSLDDMELQLIRNRGLAASYQKLGSKVFAALCQKPAPLPISALADATLAQGGSIGRQMDW</sequence>
<keyword id="KW-0408">Iron</keyword>
<keyword id="KW-0411">Iron-sulfur</keyword>
<keyword id="KW-0456">Lyase</keyword>
<keyword id="KW-0479">Metal-binding</keyword>
<keyword id="KW-0843">Virulence</keyword>